<comment type="function">
    <text evidence="3 9">Forms the helical nucleocapsid (NC) in a ratio of 1 N per 6 ribonucleotides, protecting the genome from nucleases (Probable). The encapsidated genomic RNA serves as template for transcription and replication; encapsidation by N is coupled to RNA synthesis (By similarity). Forms the encapsidation complex with the phosphoprotein protein P (By similarity). Before encapsidation, the newly synthesized free N protein, so-called N0, is chaperoned by P (By similarity).</text>
</comment>
<comment type="subunit">
    <text evidence="2 3 8">Homomultimer; forms the nucleocapsid (PubMed:9126246). Binds to the viral genomic RNA (By similarity). N0 interacts with the phosphoprotein (via N-terminus); this interaction allows P to chaperon N0 to avoid N polymerization before encapsidation (By similarity). Interacts as N-RNA template with the phosphoprotein (via C-terminus); this interaction positions the polymerase on the template (PubMed:9126246).</text>
</comment>
<comment type="subcellular location">
    <subcellularLocation>
        <location evidence="9">Virion</location>
    </subcellularLocation>
    <subcellularLocation>
        <location>Host cytoplasm</location>
    </subcellularLocation>
</comment>
<comment type="domain">
    <text evidence="3">Ncore is globular and carries regions required for self-assembly and RNA-binding. Ntail is an intrinsically disordered monomeric domain in the C-terminus.</text>
</comment>
<comment type="miscellaneous">
    <text evidence="1">Most abundant protein in the virion. There are 2564 molecules per encapsidated genome (By similarity).</text>
</comment>
<comment type="similarity">
    <text evidence="9">Belongs to the paramyxoviruses nucleocapsid family.</text>
</comment>
<reference key="1">
    <citation type="journal article" date="1991" name="Virus Genes">
        <title>Sendai virus NP gene codes for a 524 amino acid NP protein.</title>
        <authorList>
            <person name="Neubert W.J."/>
            <person name="Eckerskorn C."/>
            <person name="Homann H.E."/>
        </authorList>
    </citation>
    <scope>NUCLEOTIDE SEQUENCE [GENOMIC RNA]</scope>
</reference>
<reference key="2">
    <citation type="journal article" date="1997" name="Virology">
        <title>A highly conserved region of the Sendai virus nucleocapsid protein contributes to the NP-NP binding domain.</title>
        <authorList>
            <person name="Myers T.M."/>
            <person name="Pieters A."/>
            <person name="Moyer S.A."/>
        </authorList>
    </citation>
    <scope>HOMOMULTIMERIZATION</scope>
    <scope>MUTAGENESIS OF TYR-260; 299-LEU-ILE-300; ILE-313 AND PHE-324</scope>
</reference>
<reference key="3">
    <citation type="journal article" date="1997" name="J. Virol.">
        <title>An amino-terminal domain of the Sendai virus nucleocapsid protein is required for template function in viral RNA synthesis.</title>
        <authorList>
            <person name="Myers T.M."/>
            <person name="Moyer S.A."/>
        </authorList>
    </citation>
    <scope>MUTAGENESIS OF GLU-107; 108-LYS-ASP-109; 111-LYS-ARG-112; 114-LYS--ASP-116; 121-LYS--ASP-124 AND 126-GLU--ARG-129</scope>
</reference>
<reference key="4">
    <citation type="journal article" date="1999" name="J. Gen. Virol.">
        <title>Identification of nucleocapsid protein residues required for Sendai virus nucleocapsid formation and genome replication.</title>
        <authorList>
            <person name="Myers T.M."/>
            <person name="Smallwood S."/>
            <person name="Moyer S.A."/>
        </authorList>
    </citation>
    <scope>MUTAGENESIS OF PHE-362; 364-LEU-GLY-365; 370-LYS-ASP-371 AND 373-GLU--LYS-375</scope>
</reference>
<reference key="5">
    <citation type="journal article" date="2004" name="Virology">
        <title>Mapping the phosphoprotein binding site on Sendai virus NP protein assembled into nucleocapsids.</title>
        <authorList>
            <person name="Cevik B."/>
            <person name="Kaesberg J."/>
            <person name="Smallwood S."/>
            <person name="Feller J.A."/>
            <person name="Moyer S.A."/>
        </authorList>
    </citation>
    <scope>INTERACTION WITH THE PHOSPHOPROTEIN</scope>
    <scope>MUTAGENESIS OF 435-ASP--ARG-439; 444-GLU--ARG-448; 458-PHE--LEU-461; 465-GLU-ARG-466; 468-GLU--GLU-470; 473-ASP--ASP-475; 478-ASP--ARG-482 AND 489-GLU--ARG-491</scope>
</reference>
<dbReference type="EMBL" id="X17218">
    <property type="protein sequence ID" value="CAA35092.1"/>
    <property type="molecule type" value="Genomic_RNA"/>
</dbReference>
<dbReference type="PIR" id="S72316">
    <property type="entry name" value="S72316"/>
</dbReference>
<dbReference type="BMRB" id="Q07097"/>
<dbReference type="SMR" id="Q07097"/>
<dbReference type="Proteomes" id="UP000006825">
    <property type="component" value="Genome"/>
</dbReference>
<dbReference type="GO" id="GO:0019029">
    <property type="term" value="C:helical viral capsid"/>
    <property type="evidence" value="ECO:0007669"/>
    <property type="project" value="UniProtKB-KW"/>
</dbReference>
<dbReference type="GO" id="GO:0030430">
    <property type="term" value="C:host cell cytoplasm"/>
    <property type="evidence" value="ECO:0007669"/>
    <property type="project" value="UniProtKB-SubCell"/>
</dbReference>
<dbReference type="GO" id="GO:1990904">
    <property type="term" value="C:ribonucleoprotein complex"/>
    <property type="evidence" value="ECO:0007669"/>
    <property type="project" value="UniProtKB-KW"/>
</dbReference>
<dbReference type="GO" id="GO:0019013">
    <property type="term" value="C:viral nucleocapsid"/>
    <property type="evidence" value="ECO:0007669"/>
    <property type="project" value="UniProtKB-KW"/>
</dbReference>
<dbReference type="GO" id="GO:0060090">
    <property type="term" value="F:molecular adaptor activity"/>
    <property type="evidence" value="ECO:0000269"/>
    <property type="project" value="DisProt"/>
</dbReference>
<dbReference type="GO" id="GO:0003723">
    <property type="term" value="F:RNA binding"/>
    <property type="evidence" value="ECO:0007669"/>
    <property type="project" value="UniProtKB-KW"/>
</dbReference>
<dbReference type="GO" id="GO:0005198">
    <property type="term" value="F:structural molecule activity"/>
    <property type="evidence" value="ECO:0007669"/>
    <property type="project" value="InterPro"/>
</dbReference>
<dbReference type="GO" id="GO:0039697">
    <property type="term" value="P:negative stranded viral RNA transcription"/>
    <property type="evidence" value="ECO:0000314"/>
    <property type="project" value="UniProtKB"/>
</dbReference>
<dbReference type="InterPro" id="IPR002021">
    <property type="entry name" value="Paramyx_ncap"/>
</dbReference>
<dbReference type="Pfam" id="PF00973">
    <property type="entry name" value="Paramyxo_ncap"/>
    <property type="match status" value="1"/>
</dbReference>
<proteinExistence type="evidence at protein level"/>
<feature type="chain" id="PRO_0000142681" description="Nucleoprotein">
    <location>
        <begin position="1"/>
        <end position="524"/>
    </location>
</feature>
<feature type="region of interest" description="Ncore" evidence="3">
    <location>
        <begin position="1"/>
        <end position="404"/>
    </location>
</feature>
<feature type="region of interest" description="Ntail" evidence="3">
    <location>
        <begin position="405"/>
        <end position="524"/>
    </location>
</feature>
<feature type="region of interest" description="Homomultimerization" evidence="6">
    <location>
        <begin position="440"/>
        <end position="461"/>
    </location>
</feature>
<feature type="region of interest" description="Interaction with the phosphoprotein" evidence="6">
    <location>
        <begin position="462"/>
        <end position="471"/>
    </location>
</feature>
<feature type="region of interest" description="Disordered" evidence="4">
    <location>
        <begin position="487"/>
        <end position="524"/>
    </location>
</feature>
<feature type="compositionally biased region" description="Basic and acidic residues" evidence="4">
    <location>
        <begin position="487"/>
        <end position="508"/>
    </location>
</feature>
<feature type="binding site" evidence="2">
    <location>
        <position position="180"/>
    </location>
    <ligand>
        <name>RNA</name>
        <dbReference type="ChEBI" id="CHEBI:33697"/>
    </ligand>
</feature>
<feature type="binding site" evidence="2">
    <location>
        <position position="190"/>
    </location>
    <ligand>
        <name>RNA</name>
        <dbReference type="ChEBI" id="CHEBI:33697"/>
    </ligand>
</feature>
<feature type="binding site" evidence="2">
    <location>
        <position position="195"/>
    </location>
    <ligand>
        <name>RNA</name>
        <dbReference type="ChEBI" id="CHEBI:33697"/>
    </ligand>
</feature>
<feature type="binding site" evidence="2">
    <location>
        <position position="260"/>
    </location>
    <ligand>
        <name>RNA</name>
        <dbReference type="ChEBI" id="CHEBI:33697"/>
    </ligand>
</feature>
<feature type="binding site" evidence="2">
    <location>
        <position position="350"/>
    </location>
    <ligand>
        <name>RNA</name>
        <dbReference type="ChEBI" id="CHEBI:33697"/>
    </ligand>
</feature>
<feature type="mutagenesis site" description="29% loss of in vitro replication." evidence="7">
    <original>E</original>
    <variation>A</variation>
    <location>
        <position position="107"/>
    </location>
</feature>
<feature type="mutagenesis site" description="32% loss of in vitro replication." evidence="7">
    <original>KD</original>
    <variation>AA</variation>
    <location>
        <begin position="108"/>
        <end position="109"/>
    </location>
</feature>
<feature type="mutagenesis site" description="31% loss of in vitro replication." evidence="7">
    <original>KR</original>
    <variation>AA</variation>
    <location>
        <begin position="111"/>
        <end position="112"/>
    </location>
</feature>
<feature type="mutagenesis site" description="72% loss of in vitro replication." evidence="7">
    <original>KTD</original>
    <variation>ATA</variation>
    <location>
        <begin position="114"/>
        <end position="116"/>
    </location>
</feature>
<feature type="mutagenesis site" description="Complete loss of in vitro replication." evidence="7">
    <original>KTRD</original>
    <variation>ATAA</variation>
    <location>
        <begin position="121"/>
        <end position="124"/>
    </location>
</feature>
<feature type="mutagenesis site" description="82% loss of in vitro replication." evidence="7">
    <original>EYER</original>
    <variation>AYAA</variation>
    <location>
        <begin position="126"/>
        <end position="129"/>
    </location>
</feature>
<feature type="mutagenesis site" description="Alters homomultimerization. Complete loss of in vitro replication." evidence="8">
    <original>Y</original>
    <variation>D</variation>
    <location>
        <position position="260"/>
    </location>
</feature>
<feature type="mutagenesis site" description="Complete loss of in vitro replication. No effect on homomultimerization." evidence="8">
    <original>LI</original>
    <variation>IV</variation>
    <location>
        <begin position="299"/>
        <end position="300"/>
    </location>
</feature>
<feature type="mutagenesis site" description="Complete loss of in vitro replication. No effect on homomultimerization." evidence="8">
    <original>I</original>
    <variation>F</variation>
    <location>
        <position position="313"/>
    </location>
</feature>
<feature type="mutagenesis site" description="Unstable form with complete loss of homomultimerization and replication." evidence="8">
    <original>F</original>
    <variation>I</variation>
    <location>
        <position position="324"/>
    </location>
</feature>
<feature type="mutagenesis site" description="Unstable form with complete loss of homomultimerization and replication." evidence="8">
    <original>F</original>
    <variation>V</variation>
    <location>
        <position position="324"/>
    </location>
</feature>
<feature type="mutagenesis site" description="95% loss of in vitro replication." evidence="5">
    <original>F</original>
    <variation>A</variation>
    <location>
        <position position="362"/>
    </location>
</feature>
<feature type="mutagenesis site" description="Unstable form with almost complete loss of homomultimerization." evidence="5">
    <original>LG</original>
    <variation>AA</variation>
    <location>
        <begin position="364"/>
        <end position="365"/>
    </location>
</feature>
<feature type="mutagenesis site" description="92% loss of in vitro replication. No effect on homomultimerization." evidence="5">
    <original>KD</original>
    <variation>AA</variation>
    <location>
        <begin position="370"/>
        <end position="371"/>
    </location>
</feature>
<feature type="mutagenesis site" description="140% increase of in vitro replication." evidence="5">
    <original>ESK</original>
    <variation>ASA</variation>
    <location>
        <begin position="373"/>
        <end position="375"/>
    </location>
</feature>
<feature type="mutagenesis site" description="33% loss of replication." evidence="6">
    <original>DQDAR</original>
    <variation>AQAAA</variation>
    <location>
        <begin position="435"/>
        <end position="439"/>
    </location>
</feature>
<feature type="mutagenesis site" description="44% loss of replication." evidence="6">
    <original>ESGER</original>
    <variation>ASGAA</variation>
    <location>
        <begin position="444"/>
        <end position="448"/>
    </location>
</feature>
<feature type="mutagenesis site" description="44% loss of replication." evidence="6">
    <original>FVTL</original>
    <variation>AATA</variation>
    <location>
        <begin position="458"/>
        <end position="461"/>
    </location>
</feature>
<feature type="mutagenesis site" description="34% loss of replication." evidence="6">
    <original>ER</original>
    <variation>AA</variation>
    <location>
        <begin position="465"/>
        <end position="466"/>
    </location>
</feature>
<feature type="mutagenesis site" description="42% loss of replication." evidence="6">
    <original>EEE</original>
    <variation>AAA</variation>
    <location>
        <begin position="468"/>
        <end position="470"/>
    </location>
</feature>
<feature type="mutagenesis site" description="32% loss of replication." evidence="6">
    <original>DED</original>
    <variation>AAA</variation>
    <location>
        <begin position="473"/>
        <end position="475"/>
    </location>
</feature>
<feature type="mutagenesis site" description="29% loss of replication." evidence="6">
    <original>DIERR</original>
    <variation>AAAAA</variation>
    <location>
        <begin position="478"/>
        <end position="482"/>
    </location>
</feature>
<feature type="mutagenesis site" description="No effect on replication." evidence="6">
    <original>ERR</original>
    <variation>AAA</variation>
    <location>
        <begin position="489"/>
        <end position="491"/>
    </location>
</feature>
<evidence type="ECO:0000250" key="1"/>
<evidence type="ECO:0000250" key="2">
    <source>
        <dbReference type="UniProtKB" id="O57286"/>
    </source>
</evidence>
<evidence type="ECO:0000250" key="3">
    <source>
        <dbReference type="UniProtKB" id="P06159"/>
    </source>
</evidence>
<evidence type="ECO:0000256" key="4">
    <source>
        <dbReference type="SAM" id="MobiDB-lite"/>
    </source>
</evidence>
<evidence type="ECO:0000269" key="5">
    <source>
    </source>
</evidence>
<evidence type="ECO:0000269" key="6">
    <source>
    </source>
</evidence>
<evidence type="ECO:0000269" key="7">
    <source>
    </source>
</evidence>
<evidence type="ECO:0000269" key="8">
    <source>
    </source>
</evidence>
<evidence type="ECO:0000305" key="9"/>
<name>NCAP_SENDF</name>
<organism>
    <name type="scientific">Sendai virus (strain Fushimi)</name>
    <name type="common">SeV</name>
    <dbReference type="NCBI Taxonomy" id="11195"/>
    <lineage>
        <taxon>Viruses</taxon>
        <taxon>Riboviria</taxon>
        <taxon>Orthornavirae</taxon>
        <taxon>Negarnaviricota</taxon>
        <taxon>Haploviricotina</taxon>
        <taxon>Monjiviricetes</taxon>
        <taxon>Mononegavirales</taxon>
        <taxon>Paramyxoviridae</taxon>
        <taxon>Feraresvirinae</taxon>
        <taxon>Respirovirus</taxon>
        <taxon>Respirovirus muris</taxon>
    </lineage>
</organism>
<accession>Q07097</accession>
<gene>
    <name type="primary">N</name>
    <name type="synonym">NP</name>
</gene>
<protein>
    <recommendedName>
        <fullName>Nucleoprotein</fullName>
    </recommendedName>
    <alternativeName>
        <fullName>Nucleocapsid protein</fullName>
        <shortName>NP</shortName>
        <shortName>Protein N</shortName>
    </alternativeName>
</protein>
<keyword id="KW-0167">Capsid protein</keyword>
<keyword id="KW-1139">Helical capsid protein</keyword>
<keyword id="KW-1035">Host cytoplasm</keyword>
<keyword id="KW-0687">Ribonucleoprotein</keyword>
<keyword id="KW-0694">RNA-binding</keyword>
<keyword id="KW-0543">Viral nucleoprotein</keyword>
<keyword id="KW-0946">Virion</keyword>
<organismHost>
    <name type="scientific">Cavia cutleri</name>
    <name type="common">Guinea pig</name>
    <dbReference type="NCBI Taxonomy" id="10144"/>
</organismHost>
<organismHost>
    <name type="scientific">Cricetidae sp.</name>
    <name type="common">Hamster</name>
    <dbReference type="NCBI Taxonomy" id="36483"/>
</organismHost>
<organismHost>
    <name type="scientific">Mus musculus</name>
    <name type="common">Mouse</name>
    <dbReference type="NCBI Taxonomy" id="10090"/>
</organismHost>
<organismHost>
    <name type="scientific">Rattus norvegicus</name>
    <name type="common">Rat</name>
    <dbReference type="NCBI Taxonomy" id="10116"/>
</organismHost>
<sequence>MAGLLSTFDTFSSRRSESINKSGGGAVIPGQRSTVSVFVLGPSVTDDADKLFIATTFLAHSLDTDKQHSQRGGFLVSLLAMAYSSPELYLTTNGVNADVKYVIYNIEKDPKRTKTDGFIVKTRDMEYERTTEWLFGPMVNKSPLFQGQRVAADPDTLLQTYGYPACLGAIIVQVWIVLVKAITSSAGLRKGFFNRLEAFRQDGTVKGALVFTGETVEGIGSVMRSQQSLVSLMVETLVTMNTARSDLTTLEKNIQIVGNYIRDAGLASFMNTIKYGVETKMAALTLSNLRPDINKLRSLIDTYLSKGPRAPFICILKDPVHGEFAPGNYPALWSYAMGVAVVQNKAMQQYVTGGTYLDMEMFLLGQAVAKDAESKISSALEDELGVTDTAKERLRHHLANLSGGDGAYHEPTGGGAIEVALDNADIDLETEAHADQDARGWGGESGERWARQVSGGHFVTLHGAERLEEETNDEDVSDIERRIAMRLAERRQEDSATHGDEGRNNGVDHDEDDDAAAVAGIGGI</sequence>